<proteinExistence type="inferred from homology"/>
<organism>
    <name type="scientific">Alkaliphilus oremlandii (strain OhILAs)</name>
    <name type="common">Clostridium oremlandii (strain OhILAs)</name>
    <dbReference type="NCBI Taxonomy" id="350688"/>
    <lineage>
        <taxon>Bacteria</taxon>
        <taxon>Bacillati</taxon>
        <taxon>Bacillota</taxon>
        <taxon>Clostridia</taxon>
        <taxon>Peptostreptococcales</taxon>
        <taxon>Natronincolaceae</taxon>
        <taxon>Alkaliphilus</taxon>
    </lineage>
</organism>
<protein>
    <recommendedName>
        <fullName evidence="1">Ribosomal protein uS12 methylthiotransferase RimO</fullName>
        <shortName evidence="1">uS12 MTTase</shortName>
        <shortName evidence="1">uS12 methylthiotransferase</shortName>
        <ecNumber evidence="1">2.8.4.4</ecNumber>
    </recommendedName>
    <alternativeName>
        <fullName evidence="1">Ribosomal protein uS12 (aspartate-C(3))-methylthiotransferase</fullName>
    </alternativeName>
    <alternativeName>
        <fullName evidence="1">Ribosome maturation factor RimO</fullName>
    </alternativeName>
</protein>
<sequence length="438" mass="50362">MNVGFISLGCSKNLVVTEEIIGLFKSNHFNIVNKKEDAEIIVINTCGFIESAKQEAINTILEMAKLKNNKCKYLIVAGCLVQRYKKELEKAIPEVDLFISISEYKQIWKEIENLLDLETGKESNLDYHNRVLTTGSNMAYLKIGEGCDNHCTYCAIPNIQGPYISRTMEDILKEARNLAKQGIKELIVIAQDTTKYGLDIYGEARLPQLLEELCKIEDIEWVRFLYVYPESITDELIKVVGENDKICNYFDIPIQHISDSVLKRMNRKSDGASVRNIIEKIRREIPDVIIRTTLIVGFPGETEEDFKELYEFVEETKFDKLGVFAYSKEDNTPAAKLKEQIHHATKKSRLRKIMALQEKISRESLEQKVGNVYKVLIESRTKGGNYYIGRTYMDVPDMDGVVYIVNNTKENLMNTFVDCRIQRAKDYDLFGELYTEGK</sequence>
<accession>A8MLX7</accession>
<feature type="chain" id="PRO_0000374694" description="Ribosomal protein uS12 methylthiotransferase RimO">
    <location>
        <begin position="1"/>
        <end position="438"/>
    </location>
</feature>
<feature type="domain" description="MTTase N-terminal" evidence="1">
    <location>
        <begin position="1"/>
        <end position="116"/>
    </location>
</feature>
<feature type="domain" description="Radical SAM core" evidence="2">
    <location>
        <begin position="133"/>
        <end position="363"/>
    </location>
</feature>
<feature type="domain" description="TRAM" evidence="1">
    <location>
        <begin position="366"/>
        <end position="435"/>
    </location>
</feature>
<feature type="binding site" evidence="1">
    <location>
        <position position="10"/>
    </location>
    <ligand>
        <name>[4Fe-4S] cluster</name>
        <dbReference type="ChEBI" id="CHEBI:49883"/>
        <label>1</label>
    </ligand>
</feature>
<feature type="binding site" evidence="1">
    <location>
        <position position="46"/>
    </location>
    <ligand>
        <name>[4Fe-4S] cluster</name>
        <dbReference type="ChEBI" id="CHEBI:49883"/>
        <label>1</label>
    </ligand>
</feature>
<feature type="binding site" evidence="1">
    <location>
        <position position="79"/>
    </location>
    <ligand>
        <name>[4Fe-4S] cluster</name>
        <dbReference type="ChEBI" id="CHEBI:49883"/>
        <label>1</label>
    </ligand>
</feature>
<feature type="binding site" evidence="1">
    <location>
        <position position="147"/>
    </location>
    <ligand>
        <name>[4Fe-4S] cluster</name>
        <dbReference type="ChEBI" id="CHEBI:49883"/>
        <label>2</label>
        <note>4Fe-4S-S-AdoMet</note>
    </ligand>
</feature>
<feature type="binding site" evidence="1">
    <location>
        <position position="151"/>
    </location>
    <ligand>
        <name>[4Fe-4S] cluster</name>
        <dbReference type="ChEBI" id="CHEBI:49883"/>
        <label>2</label>
        <note>4Fe-4S-S-AdoMet</note>
    </ligand>
</feature>
<feature type="binding site" evidence="1">
    <location>
        <position position="154"/>
    </location>
    <ligand>
        <name>[4Fe-4S] cluster</name>
        <dbReference type="ChEBI" id="CHEBI:49883"/>
        <label>2</label>
        <note>4Fe-4S-S-AdoMet</note>
    </ligand>
</feature>
<name>RIMO_ALKOO</name>
<comment type="function">
    <text evidence="1">Catalyzes the methylthiolation of an aspartic acid residue of ribosomal protein uS12.</text>
</comment>
<comment type="catalytic activity">
    <reaction evidence="1">
        <text>L-aspartate(89)-[ribosomal protein uS12]-hydrogen + (sulfur carrier)-SH + AH2 + 2 S-adenosyl-L-methionine = 3-methylsulfanyl-L-aspartate(89)-[ribosomal protein uS12]-hydrogen + (sulfur carrier)-H + 5'-deoxyadenosine + L-methionine + A + S-adenosyl-L-homocysteine + 2 H(+)</text>
        <dbReference type="Rhea" id="RHEA:37087"/>
        <dbReference type="Rhea" id="RHEA-COMP:10460"/>
        <dbReference type="Rhea" id="RHEA-COMP:10461"/>
        <dbReference type="Rhea" id="RHEA-COMP:14737"/>
        <dbReference type="Rhea" id="RHEA-COMP:14739"/>
        <dbReference type="ChEBI" id="CHEBI:13193"/>
        <dbReference type="ChEBI" id="CHEBI:15378"/>
        <dbReference type="ChEBI" id="CHEBI:17319"/>
        <dbReference type="ChEBI" id="CHEBI:17499"/>
        <dbReference type="ChEBI" id="CHEBI:29917"/>
        <dbReference type="ChEBI" id="CHEBI:29961"/>
        <dbReference type="ChEBI" id="CHEBI:57844"/>
        <dbReference type="ChEBI" id="CHEBI:57856"/>
        <dbReference type="ChEBI" id="CHEBI:59789"/>
        <dbReference type="ChEBI" id="CHEBI:64428"/>
        <dbReference type="ChEBI" id="CHEBI:73599"/>
        <dbReference type="EC" id="2.8.4.4"/>
    </reaction>
</comment>
<comment type="cofactor">
    <cofactor evidence="1">
        <name>[4Fe-4S] cluster</name>
        <dbReference type="ChEBI" id="CHEBI:49883"/>
    </cofactor>
    <text evidence="1">Binds 2 [4Fe-4S] clusters. One cluster is coordinated with 3 cysteines and an exchangeable S-adenosyl-L-methionine.</text>
</comment>
<comment type="subcellular location">
    <subcellularLocation>
        <location evidence="1">Cytoplasm</location>
    </subcellularLocation>
</comment>
<comment type="similarity">
    <text evidence="1">Belongs to the methylthiotransferase family. RimO subfamily.</text>
</comment>
<keyword id="KW-0004">4Fe-4S</keyword>
<keyword id="KW-0963">Cytoplasm</keyword>
<keyword id="KW-0408">Iron</keyword>
<keyword id="KW-0411">Iron-sulfur</keyword>
<keyword id="KW-0479">Metal-binding</keyword>
<keyword id="KW-1185">Reference proteome</keyword>
<keyword id="KW-0949">S-adenosyl-L-methionine</keyword>
<keyword id="KW-0808">Transferase</keyword>
<dbReference type="EC" id="2.8.4.4" evidence="1"/>
<dbReference type="EMBL" id="CP000853">
    <property type="protein sequence ID" value="ABW18144.1"/>
    <property type="molecule type" value="Genomic_DNA"/>
</dbReference>
<dbReference type="RefSeq" id="WP_012158458.1">
    <property type="nucleotide sequence ID" value="NC_009922.1"/>
</dbReference>
<dbReference type="SMR" id="A8MLX7"/>
<dbReference type="STRING" id="350688.Clos_0582"/>
<dbReference type="KEGG" id="aoe:Clos_0582"/>
<dbReference type="eggNOG" id="COG0621">
    <property type="taxonomic scope" value="Bacteria"/>
</dbReference>
<dbReference type="HOGENOM" id="CLU_018697_0_1_9"/>
<dbReference type="OrthoDB" id="9805215at2"/>
<dbReference type="Proteomes" id="UP000000269">
    <property type="component" value="Chromosome"/>
</dbReference>
<dbReference type="GO" id="GO:0005829">
    <property type="term" value="C:cytosol"/>
    <property type="evidence" value="ECO:0007669"/>
    <property type="project" value="TreeGrafter"/>
</dbReference>
<dbReference type="GO" id="GO:0051539">
    <property type="term" value="F:4 iron, 4 sulfur cluster binding"/>
    <property type="evidence" value="ECO:0007669"/>
    <property type="project" value="UniProtKB-UniRule"/>
</dbReference>
<dbReference type="GO" id="GO:0035599">
    <property type="term" value="F:aspartic acid methylthiotransferase activity"/>
    <property type="evidence" value="ECO:0007669"/>
    <property type="project" value="TreeGrafter"/>
</dbReference>
<dbReference type="GO" id="GO:0046872">
    <property type="term" value="F:metal ion binding"/>
    <property type="evidence" value="ECO:0007669"/>
    <property type="project" value="UniProtKB-KW"/>
</dbReference>
<dbReference type="GO" id="GO:0103039">
    <property type="term" value="F:protein methylthiotransferase activity"/>
    <property type="evidence" value="ECO:0007669"/>
    <property type="project" value="UniProtKB-EC"/>
</dbReference>
<dbReference type="GO" id="GO:0006400">
    <property type="term" value="P:tRNA modification"/>
    <property type="evidence" value="ECO:0007669"/>
    <property type="project" value="InterPro"/>
</dbReference>
<dbReference type="CDD" id="cd01335">
    <property type="entry name" value="Radical_SAM"/>
    <property type="match status" value="1"/>
</dbReference>
<dbReference type="FunFam" id="3.80.30.20:FF:000001">
    <property type="entry name" value="tRNA-2-methylthio-N(6)-dimethylallyladenosine synthase 2"/>
    <property type="match status" value="1"/>
</dbReference>
<dbReference type="Gene3D" id="3.40.50.12160">
    <property type="entry name" value="Methylthiotransferase, N-terminal domain"/>
    <property type="match status" value="1"/>
</dbReference>
<dbReference type="Gene3D" id="2.40.50.140">
    <property type="entry name" value="Nucleic acid-binding proteins"/>
    <property type="match status" value="1"/>
</dbReference>
<dbReference type="Gene3D" id="3.80.30.20">
    <property type="entry name" value="tm_1862 like domain"/>
    <property type="match status" value="1"/>
</dbReference>
<dbReference type="HAMAP" id="MF_01865">
    <property type="entry name" value="MTTase_RimO"/>
    <property type="match status" value="1"/>
</dbReference>
<dbReference type="InterPro" id="IPR006638">
    <property type="entry name" value="Elp3/MiaA/NifB-like_rSAM"/>
</dbReference>
<dbReference type="InterPro" id="IPR005839">
    <property type="entry name" value="Methylthiotransferase"/>
</dbReference>
<dbReference type="InterPro" id="IPR020612">
    <property type="entry name" value="Methylthiotransferase_CS"/>
</dbReference>
<dbReference type="InterPro" id="IPR013848">
    <property type="entry name" value="Methylthiotransferase_N"/>
</dbReference>
<dbReference type="InterPro" id="IPR038135">
    <property type="entry name" value="Methylthiotransferase_N_sf"/>
</dbReference>
<dbReference type="InterPro" id="IPR012340">
    <property type="entry name" value="NA-bd_OB-fold"/>
</dbReference>
<dbReference type="InterPro" id="IPR005840">
    <property type="entry name" value="Ribosomal_uS12_MeSTrfase_RimO"/>
</dbReference>
<dbReference type="InterPro" id="IPR007197">
    <property type="entry name" value="rSAM"/>
</dbReference>
<dbReference type="InterPro" id="IPR023404">
    <property type="entry name" value="rSAM_horseshoe"/>
</dbReference>
<dbReference type="InterPro" id="IPR002792">
    <property type="entry name" value="TRAM_dom"/>
</dbReference>
<dbReference type="NCBIfam" id="TIGR01125">
    <property type="entry name" value="30S ribosomal protein S12 methylthiotransferase RimO"/>
    <property type="match status" value="1"/>
</dbReference>
<dbReference type="NCBIfam" id="TIGR00089">
    <property type="entry name" value="MiaB/RimO family radical SAM methylthiotransferase"/>
    <property type="match status" value="1"/>
</dbReference>
<dbReference type="PANTHER" id="PTHR43837">
    <property type="entry name" value="RIBOSOMAL PROTEIN S12 METHYLTHIOTRANSFERASE RIMO"/>
    <property type="match status" value="1"/>
</dbReference>
<dbReference type="PANTHER" id="PTHR43837:SF1">
    <property type="entry name" value="RIBOSOMAL PROTEIN US12 METHYLTHIOTRANSFERASE RIMO"/>
    <property type="match status" value="1"/>
</dbReference>
<dbReference type="Pfam" id="PF04055">
    <property type="entry name" value="Radical_SAM"/>
    <property type="match status" value="1"/>
</dbReference>
<dbReference type="Pfam" id="PF18693">
    <property type="entry name" value="TRAM_2"/>
    <property type="match status" value="1"/>
</dbReference>
<dbReference type="Pfam" id="PF00919">
    <property type="entry name" value="UPF0004"/>
    <property type="match status" value="1"/>
</dbReference>
<dbReference type="SFLD" id="SFLDG01082">
    <property type="entry name" value="B12-binding_domain_containing"/>
    <property type="match status" value="1"/>
</dbReference>
<dbReference type="SFLD" id="SFLDG01061">
    <property type="entry name" value="methylthiotransferase"/>
    <property type="match status" value="1"/>
</dbReference>
<dbReference type="SFLD" id="SFLDF00274">
    <property type="entry name" value="ribosomal_protein_S12_methylth"/>
    <property type="match status" value="1"/>
</dbReference>
<dbReference type="SMART" id="SM00729">
    <property type="entry name" value="Elp3"/>
    <property type="match status" value="1"/>
</dbReference>
<dbReference type="SUPFAM" id="SSF102114">
    <property type="entry name" value="Radical SAM enzymes"/>
    <property type="match status" value="1"/>
</dbReference>
<dbReference type="PROSITE" id="PS51449">
    <property type="entry name" value="MTTASE_N"/>
    <property type="match status" value="1"/>
</dbReference>
<dbReference type="PROSITE" id="PS01278">
    <property type="entry name" value="MTTASE_RADICAL"/>
    <property type="match status" value="1"/>
</dbReference>
<dbReference type="PROSITE" id="PS51918">
    <property type="entry name" value="RADICAL_SAM"/>
    <property type="match status" value="1"/>
</dbReference>
<dbReference type="PROSITE" id="PS50926">
    <property type="entry name" value="TRAM"/>
    <property type="match status" value="1"/>
</dbReference>
<reference key="1">
    <citation type="submission" date="2007-10" db="EMBL/GenBank/DDBJ databases">
        <title>Complete genome of Alkaliphilus oremlandii OhILAs.</title>
        <authorList>
            <person name="Copeland A."/>
            <person name="Lucas S."/>
            <person name="Lapidus A."/>
            <person name="Barry K."/>
            <person name="Detter J.C."/>
            <person name="Glavina del Rio T."/>
            <person name="Hammon N."/>
            <person name="Israni S."/>
            <person name="Dalin E."/>
            <person name="Tice H."/>
            <person name="Pitluck S."/>
            <person name="Chain P."/>
            <person name="Malfatti S."/>
            <person name="Shin M."/>
            <person name="Vergez L."/>
            <person name="Schmutz J."/>
            <person name="Larimer F."/>
            <person name="Land M."/>
            <person name="Hauser L."/>
            <person name="Kyrpides N."/>
            <person name="Mikhailova N."/>
            <person name="Stolz J.F."/>
            <person name="Dawson A."/>
            <person name="Fisher E."/>
            <person name="Crable B."/>
            <person name="Perera E."/>
            <person name="Lisak J."/>
            <person name="Ranganathan M."/>
            <person name="Basu P."/>
            <person name="Richardson P."/>
        </authorList>
    </citation>
    <scope>NUCLEOTIDE SEQUENCE [LARGE SCALE GENOMIC DNA]</scope>
    <source>
        <strain>OhILAs</strain>
    </source>
</reference>
<gene>
    <name evidence="1" type="primary">rimO</name>
    <name type="ordered locus">Clos_0582</name>
</gene>
<evidence type="ECO:0000255" key="1">
    <source>
        <dbReference type="HAMAP-Rule" id="MF_01865"/>
    </source>
</evidence>
<evidence type="ECO:0000255" key="2">
    <source>
        <dbReference type="PROSITE-ProRule" id="PRU01266"/>
    </source>
</evidence>